<gene>
    <name type="primary">yneQ</name>
    <name type="ordered locus">BSU18050</name>
</gene>
<accession>Q45062</accession>
<accession>Q796G7</accession>
<organism>
    <name type="scientific">Bacillus subtilis (strain 168)</name>
    <dbReference type="NCBI Taxonomy" id="224308"/>
    <lineage>
        <taxon>Bacteria</taxon>
        <taxon>Bacillati</taxon>
        <taxon>Bacillota</taxon>
        <taxon>Bacilli</taxon>
        <taxon>Bacillales</taxon>
        <taxon>Bacillaceae</taxon>
        <taxon>Bacillus</taxon>
    </lineage>
</organism>
<dbReference type="EMBL" id="Z73234">
    <property type="protein sequence ID" value="CAA97602.1"/>
    <property type="molecule type" value="Genomic_DNA"/>
</dbReference>
<dbReference type="EMBL" id="AL009126">
    <property type="protein sequence ID" value="CAB13688.1"/>
    <property type="molecule type" value="Genomic_DNA"/>
</dbReference>
<dbReference type="PIR" id="G69891">
    <property type="entry name" value="G69891"/>
</dbReference>
<dbReference type="RefSeq" id="NP_389687.1">
    <property type="nucleotide sequence ID" value="NC_000964.3"/>
</dbReference>
<dbReference type="RefSeq" id="WP_003231564.1">
    <property type="nucleotide sequence ID" value="NZ_OZ025638.1"/>
</dbReference>
<dbReference type="FunCoup" id="Q45062">
    <property type="interactions" value="6"/>
</dbReference>
<dbReference type="STRING" id="224308.BSU18050"/>
<dbReference type="PaxDb" id="224308-BSU18050"/>
<dbReference type="EnsemblBacteria" id="CAB13688">
    <property type="protein sequence ID" value="CAB13688"/>
    <property type="gene ID" value="BSU_18050"/>
</dbReference>
<dbReference type="GeneID" id="937998"/>
<dbReference type="KEGG" id="bsu:BSU18050"/>
<dbReference type="PATRIC" id="fig|224308.179.peg.1967"/>
<dbReference type="eggNOG" id="ENOG5032S7S">
    <property type="taxonomic scope" value="Bacteria"/>
</dbReference>
<dbReference type="InParanoid" id="Q45062"/>
<dbReference type="OrthoDB" id="2361368at2"/>
<dbReference type="PhylomeDB" id="Q45062"/>
<dbReference type="BioCyc" id="BSUB:BSU18050-MONOMER"/>
<dbReference type="Proteomes" id="UP000001570">
    <property type="component" value="Chromosome"/>
</dbReference>
<feature type="chain" id="PRO_0000359962" description="Uncharacterized protein YneQ">
    <location>
        <begin position="1"/>
        <end position="99"/>
    </location>
</feature>
<sequence length="99" mass="11745">MAFGVKREELNRWKQAVKRGEIAFLTHYWLDDRFPEAKTVTKAGCADIDKLVQWGAAYGLKKEWIHKKSEFPHFDLLGETQKYILEQENLTDHLIRFHL</sequence>
<name>YNEQ_BACSU</name>
<proteinExistence type="predicted"/>
<keyword id="KW-1185">Reference proteome</keyword>
<reference key="1">
    <citation type="journal article" date="1996" name="Microbiology">
        <title>New genes in the 170 degrees region of the Bacillus subtilis genome encode DNA gyrase subunits, a thioredoxin, a xylanase and an amino acid transporter.</title>
        <authorList>
            <person name="Rose M."/>
            <person name="Entian K.-D."/>
        </authorList>
    </citation>
    <scope>NUCLEOTIDE SEQUENCE [GENOMIC DNA]</scope>
    <source>
        <strain>168</strain>
    </source>
</reference>
<reference key="2">
    <citation type="journal article" date="1997" name="Nature">
        <title>The complete genome sequence of the Gram-positive bacterium Bacillus subtilis.</title>
        <authorList>
            <person name="Kunst F."/>
            <person name="Ogasawara N."/>
            <person name="Moszer I."/>
            <person name="Albertini A.M."/>
            <person name="Alloni G."/>
            <person name="Azevedo V."/>
            <person name="Bertero M.G."/>
            <person name="Bessieres P."/>
            <person name="Bolotin A."/>
            <person name="Borchert S."/>
            <person name="Borriss R."/>
            <person name="Boursier L."/>
            <person name="Brans A."/>
            <person name="Braun M."/>
            <person name="Brignell S.C."/>
            <person name="Bron S."/>
            <person name="Brouillet S."/>
            <person name="Bruschi C.V."/>
            <person name="Caldwell B."/>
            <person name="Capuano V."/>
            <person name="Carter N.M."/>
            <person name="Choi S.-K."/>
            <person name="Codani J.-J."/>
            <person name="Connerton I.F."/>
            <person name="Cummings N.J."/>
            <person name="Daniel R.A."/>
            <person name="Denizot F."/>
            <person name="Devine K.M."/>
            <person name="Duesterhoeft A."/>
            <person name="Ehrlich S.D."/>
            <person name="Emmerson P.T."/>
            <person name="Entian K.-D."/>
            <person name="Errington J."/>
            <person name="Fabret C."/>
            <person name="Ferrari E."/>
            <person name="Foulger D."/>
            <person name="Fritz C."/>
            <person name="Fujita M."/>
            <person name="Fujita Y."/>
            <person name="Fuma S."/>
            <person name="Galizzi A."/>
            <person name="Galleron N."/>
            <person name="Ghim S.-Y."/>
            <person name="Glaser P."/>
            <person name="Goffeau A."/>
            <person name="Golightly E.J."/>
            <person name="Grandi G."/>
            <person name="Guiseppi G."/>
            <person name="Guy B.J."/>
            <person name="Haga K."/>
            <person name="Haiech J."/>
            <person name="Harwood C.R."/>
            <person name="Henaut A."/>
            <person name="Hilbert H."/>
            <person name="Holsappel S."/>
            <person name="Hosono S."/>
            <person name="Hullo M.-F."/>
            <person name="Itaya M."/>
            <person name="Jones L.-M."/>
            <person name="Joris B."/>
            <person name="Karamata D."/>
            <person name="Kasahara Y."/>
            <person name="Klaerr-Blanchard M."/>
            <person name="Klein C."/>
            <person name="Kobayashi Y."/>
            <person name="Koetter P."/>
            <person name="Koningstein G."/>
            <person name="Krogh S."/>
            <person name="Kumano M."/>
            <person name="Kurita K."/>
            <person name="Lapidus A."/>
            <person name="Lardinois S."/>
            <person name="Lauber J."/>
            <person name="Lazarevic V."/>
            <person name="Lee S.-M."/>
            <person name="Levine A."/>
            <person name="Liu H."/>
            <person name="Masuda S."/>
            <person name="Mauel C."/>
            <person name="Medigue C."/>
            <person name="Medina N."/>
            <person name="Mellado R.P."/>
            <person name="Mizuno M."/>
            <person name="Moestl D."/>
            <person name="Nakai S."/>
            <person name="Noback M."/>
            <person name="Noone D."/>
            <person name="O'Reilly M."/>
            <person name="Ogawa K."/>
            <person name="Ogiwara A."/>
            <person name="Oudega B."/>
            <person name="Park S.-H."/>
            <person name="Parro V."/>
            <person name="Pohl T.M."/>
            <person name="Portetelle D."/>
            <person name="Porwollik S."/>
            <person name="Prescott A.M."/>
            <person name="Presecan E."/>
            <person name="Pujic P."/>
            <person name="Purnelle B."/>
            <person name="Rapoport G."/>
            <person name="Rey M."/>
            <person name="Reynolds S."/>
            <person name="Rieger M."/>
            <person name="Rivolta C."/>
            <person name="Rocha E."/>
            <person name="Roche B."/>
            <person name="Rose M."/>
            <person name="Sadaie Y."/>
            <person name="Sato T."/>
            <person name="Scanlan E."/>
            <person name="Schleich S."/>
            <person name="Schroeter R."/>
            <person name="Scoffone F."/>
            <person name="Sekiguchi J."/>
            <person name="Sekowska A."/>
            <person name="Seror S.J."/>
            <person name="Serror P."/>
            <person name="Shin B.-S."/>
            <person name="Soldo B."/>
            <person name="Sorokin A."/>
            <person name="Tacconi E."/>
            <person name="Takagi T."/>
            <person name="Takahashi H."/>
            <person name="Takemaru K."/>
            <person name="Takeuchi M."/>
            <person name="Tamakoshi A."/>
            <person name="Tanaka T."/>
            <person name="Terpstra P."/>
            <person name="Tognoni A."/>
            <person name="Tosato V."/>
            <person name="Uchiyama S."/>
            <person name="Vandenbol M."/>
            <person name="Vannier F."/>
            <person name="Vassarotti A."/>
            <person name="Viari A."/>
            <person name="Wambutt R."/>
            <person name="Wedler E."/>
            <person name="Wedler H."/>
            <person name="Weitzenegger T."/>
            <person name="Winters P."/>
            <person name="Wipat A."/>
            <person name="Yamamoto H."/>
            <person name="Yamane K."/>
            <person name="Yasumoto K."/>
            <person name="Yata K."/>
            <person name="Yoshida K."/>
            <person name="Yoshikawa H.-F."/>
            <person name="Zumstein E."/>
            <person name="Yoshikawa H."/>
            <person name="Danchin A."/>
        </authorList>
    </citation>
    <scope>NUCLEOTIDE SEQUENCE [LARGE SCALE GENOMIC DNA]</scope>
    <source>
        <strain>168</strain>
    </source>
</reference>
<protein>
    <recommendedName>
        <fullName>Uncharacterized protein YneQ</fullName>
    </recommendedName>
</protein>